<proteinExistence type="inferred from homology"/>
<sequence length="1925" mass="215612">MEDASKQLRVLDAQERAKAAFQLDFIASVETLEDAQEKYEGMMFRSGTKLPSTHIKLAIDLRVAEKDLRRHVKNVPTVLEIGPSVESVRYAVQTRDKERVHGCTFSDARDNLRHNKIGYEAHYDRKIGPDAALLAAGIPTDTFCVDGFSNCEYQSPLAIACHSLYPDGESNSIMDVAKGMALHGTHVIYAWMHLPVELLTLTDADNIFEGYSIRFEETGALPCTKRRKAIFSGYNDFGSAYVHDAHHWAGWLKHRGVDTPYGFSILIDIQQRFGMHTKLKITRGHSSGSITTVFPLSKLGLIWVPNIVKIMYPKAKHEPEYIVTDKKKYEGVCVYVGTRVQSSGKSITLAEIVQYIRTRLTRIILNGTVHEKTWTIAEQDIERLAVSIMFRKNVERAVSEKALMRAQKKCKSAEKQALLPVWMRRIANWFQDKFQIDEEVVRKRYLECLKAQPWIHADKVVNCETKRYNPTVAEVGPKNHLLATTGLRELQREIPSANEPQDRGAKAWHSAHADLDIYAEGLRLDSAKEAAAGKQSLAITLQQAFQVLGKTKCEGCNNIEIEYWTGPPGSGKSRAAKPRFADLQGGVLYCAPTRTLRDALDESVVHPSRVCTYHNALHVAAKESGNRPFDVIVIDEAETTPACYVGTMHHASPSSRIVCLGDPHQIGYIDFSDRKDDLKPFSIIAAECRTRRFNTTYRCPQDVLNLPIFKTLYPDAISFSKQLTSIRYLTRARSVTRTRHAQTLTQDQKPHSEPPVTAHEPQARRTDVIVHYAGTLPERALLEKVRHINVALTRHTNALYIRDESEKGELVPSLMTPPSWSTYRCTPVDKQMVPDPVAVERENGSSGPCDSHHIGAITILQELGKLTDTKGVRVFESEAVPTAHRRVVLDGNLDSGPDRYPMYQFTNLRGTKYTNIKDNQQALHTLVGRYARKINSSSREDAEFDVKRITARLKEWIPFRTAEPEQVDSCFADAMQKIAERGHGVDDIEDFWSNEGQRISYHLKGQQKVMDPTKLKLGQGISAHEKCANIALSAWVRIIQDQMSTSEKFIFANGQSDRDTMSIIEARLQEKAREFKSIDIKEFDTVHNWVSILVFSWRCDRGCPEHLIEYFEKRSKSRTLSSRIGSVDVSFMLDSGAVWTIARNTLFASGLMLALFVGVDFIAAKGDDVFLAGNNLYLDAERLRMGSYLAANNLKIEKTAVVSFIGFIVSQAAVTADVVRLATRTYGRSYKNADDLAKYKIAIADHCKLFRSPRTRLMTAINCATLYGTSKECINYLMDALDAFGHTKMSDLHLDPGFVMRVTPMKVDERVYSGQDGCQRADKTREKQPEPGQPGPQQQQQASTQEAGSKTSPRSRTDYQPRPDGRTREPREHPGQPRSDTREGVKASDDGESHGSDIRGMDSRLSRPGRRIQDEPGRRENSRRRDTSVNMRSISRDRGRQIPGTEFYDATAGWRDLASTSDASPVLQASVVVHHHHQQHGSRSDERRSGCVRERLEQQDGLDRSDVPKLGASRERVLHGRPDRSADGRTTPDSTGCIRVTRELPSDIERRHSVLQRTHSRESGSGGDRAVPTGQRTPEGEPGHSSRDHPNGRNVTARRFRAELHIDDDDRGPGRVRGRSNPATHGVDGADAGVGAAGVPDCEPDIRRRKHNHHHDHAATRVGDGNVAIHSQQRDGHRDRGRGSATVRVRSEFGRLGTESAGHQLNQDSTNEHEPNDAGNAQDHSVPTQRNEGLLYAPEGVPTRVRNDNGDVLWTGAMEDTEDNCGRLPPGNWWTPGYHRQQLRDRRCRDDRYVYINRTLLQGVPTLRSDTGGGEPLGPLRQCDTSEGRRGANSGSNLDRSAPIRIPGTIQRIRGPIRDGGQDHSPDTSLCAISSRSGECGDGLHRERDRECSLEFHLGEAATKSETCWRNRSRSPQSCGPHREP</sequence>
<protein>
    <recommendedName>
        <fullName>Methyltransferase/helicase/RNA-directed RNA polymerase</fullName>
        <ecNumber>2.1.1.-</ecNumber>
        <ecNumber>2.7.7.48</ecNumber>
        <ecNumber>3.6.4.13</ecNumber>
    </recommendedName>
</protein>
<name>RDRP_NCBVS</name>
<evidence type="ECO:0000255" key="1">
    <source>
        <dbReference type="PROSITE-ProRule" id="PRU01079"/>
    </source>
</evidence>
<evidence type="ECO:0000256" key="2">
    <source>
        <dbReference type="SAM" id="MobiDB-lite"/>
    </source>
</evidence>
<evidence type="ECO:0000305" key="3"/>
<comment type="function">
    <text evidence="3">RNA-dependent RNA polymerase replicates the viral genome.</text>
</comment>
<comment type="catalytic activity">
    <reaction>
        <text>RNA(n) + a ribonucleoside 5'-triphosphate = RNA(n+1) + diphosphate</text>
        <dbReference type="Rhea" id="RHEA:21248"/>
        <dbReference type="Rhea" id="RHEA-COMP:14527"/>
        <dbReference type="Rhea" id="RHEA-COMP:17342"/>
        <dbReference type="ChEBI" id="CHEBI:33019"/>
        <dbReference type="ChEBI" id="CHEBI:61557"/>
        <dbReference type="ChEBI" id="CHEBI:140395"/>
        <dbReference type="EC" id="2.7.7.48"/>
    </reaction>
</comment>
<comment type="catalytic activity">
    <reaction>
        <text>ATP + H2O = ADP + phosphate + H(+)</text>
        <dbReference type="Rhea" id="RHEA:13065"/>
        <dbReference type="ChEBI" id="CHEBI:15377"/>
        <dbReference type="ChEBI" id="CHEBI:15378"/>
        <dbReference type="ChEBI" id="CHEBI:30616"/>
        <dbReference type="ChEBI" id="CHEBI:43474"/>
        <dbReference type="ChEBI" id="CHEBI:456216"/>
        <dbReference type="EC" id="3.6.4.13"/>
    </reaction>
</comment>
<comment type="similarity">
    <text evidence="3">Belongs to the ssRNA positive-strand viruses RNA-directed RNA polymerase family.</text>
</comment>
<organism>
    <name type="scientific">Nudaurelia capensis beta virus (isolate Pine emperor moth/South Africa)</name>
    <name type="common">NbetaV</name>
    <dbReference type="NCBI Taxonomy" id="652108"/>
    <lineage>
        <taxon>Viruses</taxon>
        <taxon>Riboviria</taxon>
        <taxon>Orthornavirae</taxon>
        <taxon>Kitrinoviricota</taxon>
        <taxon>Alsuviricetes</taxon>
        <taxon>Hepelivirales</taxon>
        <taxon>Alphatetraviridae</taxon>
        <taxon>Betatetravirus</taxon>
        <taxon>Nudaurelia capensis beta virus</taxon>
    </lineage>
</organism>
<accession>Q9YRB3</accession>
<feature type="chain" id="PRO_0000402485" description="Methyltransferase/helicase/RNA-directed RNA polymerase">
    <location>
        <begin position="1"/>
        <end position="1925"/>
    </location>
</feature>
<feature type="domain" description="Alphavirus-like MT" evidence="1">
    <location>
        <begin position="45"/>
        <end position="252"/>
    </location>
</feature>
<feature type="domain" description="(+)RNA virus helicase ATP-binding">
    <location>
        <begin position="533"/>
        <end position="693"/>
    </location>
</feature>
<feature type="domain" description="(+)RNA virus helicase C-terminal">
    <location>
        <begin position="694"/>
        <end position="834"/>
    </location>
</feature>
<feature type="region of interest" description="Disordered" evidence="2">
    <location>
        <begin position="737"/>
        <end position="760"/>
    </location>
</feature>
<feature type="region of interest" description="Disordered" evidence="2">
    <location>
        <begin position="1310"/>
        <end position="1445"/>
    </location>
</feature>
<feature type="region of interest" description="Disordered" evidence="2">
    <location>
        <begin position="1468"/>
        <end position="1636"/>
    </location>
</feature>
<feature type="region of interest" description="Disordered" evidence="2">
    <location>
        <begin position="1666"/>
        <end position="1727"/>
    </location>
</feature>
<feature type="region of interest" description="Disordered" evidence="2">
    <location>
        <begin position="1806"/>
        <end position="1847"/>
    </location>
</feature>
<feature type="region of interest" description="Disordered" evidence="2">
    <location>
        <begin position="1905"/>
        <end position="1925"/>
    </location>
</feature>
<feature type="compositionally biased region" description="Basic and acidic residues" evidence="2">
    <location>
        <begin position="1319"/>
        <end position="1329"/>
    </location>
</feature>
<feature type="compositionally biased region" description="Polar residues" evidence="2">
    <location>
        <begin position="1342"/>
        <end position="1354"/>
    </location>
</feature>
<feature type="compositionally biased region" description="Basic and acidic residues" evidence="2">
    <location>
        <begin position="1355"/>
        <end position="1427"/>
    </location>
</feature>
<feature type="compositionally biased region" description="Basic and acidic residues" evidence="2">
    <location>
        <begin position="1482"/>
        <end position="1527"/>
    </location>
</feature>
<feature type="compositionally biased region" description="Basic and acidic residues" evidence="2">
    <location>
        <begin position="1540"/>
        <end position="1552"/>
    </location>
</feature>
<feature type="compositionally biased region" description="Basic and acidic residues" evidence="2">
    <location>
        <begin position="1578"/>
        <end position="1591"/>
    </location>
</feature>
<feature type="compositionally biased region" description="Low complexity" evidence="2">
    <location>
        <begin position="1626"/>
        <end position="1636"/>
    </location>
</feature>
<feature type="compositionally biased region" description="Basic and acidic residues" evidence="2">
    <location>
        <begin position="1672"/>
        <end position="1682"/>
    </location>
</feature>
<feature type="compositionally biased region" description="Polar residues" evidence="2">
    <location>
        <begin position="1905"/>
        <end position="1918"/>
    </location>
</feature>
<dbReference type="EC" id="2.1.1.-"/>
<dbReference type="EC" id="2.7.7.48"/>
<dbReference type="EC" id="3.6.4.13"/>
<dbReference type="EMBL" id="AF102884">
    <property type="protein sequence ID" value="AAC97509.1"/>
    <property type="molecule type" value="Genomic_RNA"/>
</dbReference>
<dbReference type="RefSeq" id="NP_048059.1">
    <property type="nucleotide sequence ID" value="NC_001990.1"/>
</dbReference>
<dbReference type="GeneID" id="1450472"/>
<dbReference type="KEGG" id="vg:1450472"/>
<dbReference type="Proteomes" id="UP000000831">
    <property type="component" value="Segment"/>
</dbReference>
<dbReference type="GO" id="GO:0005524">
    <property type="term" value="F:ATP binding"/>
    <property type="evidence" value="ECO:0007669"/>
    <property type="project" value="UniProtKB-KW"/>
</dbReference>
<dbReference type="GO" id="GO:0016887">
    <property type="term" value="F:ATP hydrolysis activity"/>
    <property type="evidence" value="ECO:0007669"/>
    <property type="project" value="RHEA"/>
</dbReference>
<dbReference type="GO" id="GO:0008174">
    <property type="term" value="F:mRNA methyltransferase activity"/>
    <property type="evidence" value="ECO:0007669"/>
    <property type="project" value="InterPro"/>
</dbReference>
<dbReference type="GO" id="GO:0003723">
    <property type="term" value="F:RNA binding"/>
    <property type="evidence" value="ECO:0007669"/>
    <property type="project" value="InterPro"/>
</dbReference>
<dbReference type="GO" id="GO:0003724">
    <property type="term" value="F:RNA helicase activity"/>
    <property type="evidence" value="ECO:0007669"/>
    <property type="project" value="UniProtKB-EC"/>
</dbReference>
<dbReference type="GO" id="GO:0003968">
    <property type="term" value="F:RNA-directed RNA polymerase activity"/>
    <property type="evidence" value="ECO:0007669"/>
    <property type="project" value="UniProtKB-KW"/>
</dbReference>
<dbReference type="GO" id="GO:0006351">
    <property type="term" value="P:DNA-templated transcription"/>
    <property type="evidence" value="ECO:0007669"/>
    <property type="project" value="InterPro"/>
</dbReference>
<dbReference type="GO" id="GO:0016556">
    <property type="term" value="P:mRNA modification"/>
    <property type="evidence" value="ECO:0007669"/>
    <property type="project" value="InterPro"/>
</dbReference>
<dbReference type="GO" id="GO:0006396">
    <property type="term" value="P:RNA processing"/>
    <property type="evidence" value="ECO:0007669"/>
    <property type="project" value="InterPro"/>
</dbReference>
<dbReference type="Gene3D" id="3.40.50.300">
    <property type="entry name" value="P-loop containing nucleotide triphosphate hydrolases"/>
    <property type="match status" value="2"/>
</dbReference>
<dbReference type="InterPro" id="IPR027351">
    <property type="entry name" value="(+)RNA_virus_helicase_core_dom"/>
</dbReference>
<dbReference type="InterPro" id="IPR002588">
    <property type="entry name" value="Alphavirus-like_MT_dom"/>
</dbReference>
<dbReference type="InterPro" id="IPR043502">
    <property type="entry name" value="DNA/RNA_pol_sf"/>
</dbReference>
<dbReference type="InterPro" id="IPR027417">
    <property type="entry name" value="P-loop_NTPase"/>
</dbReference>
<dbReference type="InterPro" id="IPR001788">
    <property type="entry name" value="RNA-dep_RNA_pol_alsuvir"/>
</dbReference>
<dbReference type="Pfam" id="PF00978">
    <property type="entry name" value="RdRP_2"/>
    <property type="match status" value="1"/>
</dbReference>
<dbReference type="Pfam" id="PF01443">
    <property type="entry name" value="Viral_helicase1"/>
    <property type="match status" value="1"/>
</dbReference>
<dbReference type="Pfam" id="PF01660">
    <property type="entry name" value="Vmethyltransf"/>
    <property type="match status" value="1"/>
</dbReference>
<dbReference type="SUPFAM" id="SSF56672">
    <property type="entry name" value="DNA/RNA polymerases"/>
    <property type="match status" value="1"/>
</dbReference>
<dbReference type="SUPFAM" id="SSF52540">
    <property type="entry name" value="P-loop containing nucleoside triphosphate hydrolases"/>
    <property type="match status" value="1"/>
</dbReference>
<dbReference type="PROSITE" id="PS51743">
    <property type="entry name" value="ALPHAVIRUS_MT"/>
    <property type="match status" value="1"/>
</dbReference>
<dbReference type="PROSITE" id="PS51657">
    <property type="entry name" value="PSRV_HELICASE"/>
    <property type="match status" value="1"/>
</dbReference>
<keyword id="KW-0067">ATP-binding</keyword>
<keyword id="KW-0347">Helicase</keyword>
<keyword id="KW-0378">Hydrolase</keyword>
<keyword id="KW-0547">Nucleotide-binding</keyword>
<keyword id="KW-0548">Nucleotidyltransferase</keyword>
<keyword id="KW-1185">Reference proteome</keyword>
<keyword id="KW-0696">RNA-directed RNA polymerase</keyword>
<keyword id="KW-0808">Transferase</keyword>
<reference key="1">
    <citation type="journal article" date="1999" name="Virology">
        <title>Sequence of the genomic RNA of nudaurelia beta virus (Tetraviridae) defines a novel virus genome organization.</title>
        <authorList>
            <person name="Gordon K.H."/>
            <person name="Williams M.R."/>
            <person name="Hendry D.A."/>
            <person name="Hanzlik T.N."/>
        </authorList>
    </citation>
    <scope>NUCLEOTIDE SEQUENCE [GENOMIC RNA]</scope>
</reference>